<feature type="chain" id="PRO_1000000503" description="Argininosuccinate lyase">
    <location>
        <begin position="1"/>
        <end position="481"/>
    </location>
</feature>
<reference key="1">
    <citation type="submission" date="2007-06" db="EMBL/GenBank/DDBJ databases">
        <title>Complete sequence of Methanococcus vannielii SB.</title>
        <authorList>
            <consortium name="US DOE Joint Genome Institute"/>
            <person name="Copeland A."/>
            <person name="Lucas S."/>
            <person name="Lapidus A."/>
            <person name="Barry K."/>
            <person name="Glavina del Rio T."/>
            <person name="Dalin E."/>
            <person name="Tice H."/>
            <person name="Pitluck S."/>
            <person name="Chain P."/>
            <person name="Malfatti S."/>
            <person name="Shin M."/>
            <person name="Vergez L."/>
            <person name="Schmutz J."/>
            <person name="Larimer F."/>
            <person name="Land M."/>
            <person name="Hauser L."/>
            <person name="Kyrpides N."/>
            <person name="Anderson I."/>
            <person name="Sieprawska-Lupa M."/>
            <person name="Whitman W.B."/>
            <person name="Richardson P."/>
        </authorList>
    </citation>
    <scope>NUCLEOTIDE SEQUENCE [LARGE SCALE GENOMIC DNA]</scope>
    <source>
        <strain>ATCC 35089 / DSM 1224 / JCM 13029 / OCM 148 / SB</strain>
    </source>
</reference>
<name>ARLY_METVS</name>
<keyword id="KW-0028">Amino-acid biosynthesis</keyword>
<keyword id="KW-0055">Arginine biosynthesis</keyword>
<keyword id="KW-0963">Cytoplasm</keyword>
<keyword id="KW-0456">Lyase</keyword>
<organism>
    <name type="scientific">Methanococcus vannielii (strain ATCC 35089 / DSM 1224 / JCM 13029 / OCM 148 / SB)</name>
    <dbReference type="NCBI Taxonomy" id="406327"/>
    <lineage>
        <taxon>Archaea</taxon>
        <taxon>Methanobacteriati</taxon>
        <taxon>Methanobacteriota</taxon>
        <taxon>Methanomada group</taxon>
        <taxon>Methanococci</taxon>
        <taxon>Methanococcales</taxon>
        <taxon>Methanococcaceae</taxon>
        <taxon>Methanococcus</taxon>
    </lineage>
</organism>
<comment type="catalytic activity">
    <reaction evidence="1">
        <text>2-(N(omega)-L-arginino)succinate = fumarate + L-arginine</text>
        <dbReference type="Rhea" id="RHEA:24020"/>
        <dbReference type="ChEBI" id="CHEBI:29806"/>
        <dbReference type="ChEBI" id="CHEBI:32682"/>
        <dbReference type="ChEBI" id="CHEBI:57472"/>
        <dbReference type="EC" id="4.3.2.1"/>
    </reaction>
</comment>
<comment type="pathway">
    <text evidence="1">Amino-acid biosynthesis; L-arginine biosynthesis; L-arginine from L-ornithine and carbamoyl phosphate: step 3/3.</text>
</comment>
<comment type="subcellular location">
    <subcellularLocation>
        <location evidence="1">Cytoplasm</location>
    </subcellularLocation>
</comment>
<comment type="similarity">
    <text evidence="1">Belongs to the lyase 1 family. Argininosuccinate lyase subfamily.</text>
</comment>
<accession>A6URI4</accession>
<evidence type="ECO:0000255" key="1">
    <source>
        <dbReference type="HAMAP-Rule" id="MF_00006"/>
    </source>
</evidence>
<sequence length="481" mass="54254">MNILRRGRLGSSVKEDVMKFTTSLEFDKEIFQSDILCDIAHTTMLMEQKIVSIEFGEKVIEELKKIAKVGMDSLNLDPSLDDIHMVIESELIKKLGEDVAGRMHTGRSRNDEVATDLRLSLRKKVLEIVKLLIDMEENMLSLAKEHSETITVGYTHLQQAQPVTFGHQILSHVSAVERDISRFFDAYNRINISPLGCGAMATTGFNIDRKRTMELLGFYELIENSMDGVSSRDFIVETMANISMLGTNLSKICEELILFSTAEFKTVEIADEYTSTSSIMPQKKNPDVAEIARAKLSTLNGNLITVLTIMKALPNTYNRDLQEISPHLWKSTYTIIDCIKMIDGMVSTIKVNKERMKENAEKNYATATELADTLVRECNIAFRMAHGIVGELVRTSIEEKVEIKDIILDVFKANGLHLSKEKIDSALDPYENVKLRDVIGGPAPKEVERAVLSFKNKMELHSKNLNDKMRSIEAVEENLLN</sequence>
<proteinExistence type="inferred from homology"/>
<dbReference type="EC" id="4.3.2.1" evidence="1"/>
<dbReference type="EMBL" id="CP000742">
    <property type="protein sequence ID" value="ABR55106.1"/>
    <property type="molecule type" value="Genomic_DNA"/>
</dbReference>
<dbReference type="RefSeq" id="WP_012066021.1">
    <property type="nucleotide sequence ID" value="NC_009634.1"/>
</dbReference>
<dbReference type="SMR" id="A6URI4"/>
<dbReference type="STRING" id="406327.Mevan_1208"/>
<dbReference type="GeneID" id="5325684"/>
<dbReference type="KEGG" id="mvn:Mevan_1208"/>
<dbReference type="eggNOG" id="arCOG01748">
    <property type="taxonomic scope" value="Archaea"/>
</dbReference>
<dbReference type="HOGENOM" id="CLU_027272_2_3_2"/>
<dbReference type="OrthoDB" id="27337at2157"/>
<dbReference type="UniPathway" id="UPA00068">
    <property type="reaction ID" value="UER00114"/>
</dbReference>
<dbReference type="Proteomes" id="UP000001107">
    <property type="component" value="Chromosome"/>
</dbReference>
<dbReference type="GO" id="GO:0005829">
    <property type="term" value="C:cytosol"/>
    <property type="evidence" value="ECO:0007669"/>
    <property type="project" value="TreeGrafter"/>
</dbReference>
<dbReference type="GO" id="GO:0004056">
    <property type="term" value="F:argininosuccinate lyase activity"/>
    <property type="evidence" value="ECO:0007669"/>
    <property type="project" value="UniProtKB-UniRule"/>
</dbReference>
<dbReference type="GO" id="GO:0042450">
    <property type="term" value="P:arginine biosynthetic process via ornithine"/>
    <property type="evidence" value="ECO:0007669"/>
    <property type="project" value="InterPro"/>
</dbReference>
<dbReference type="GO" id="GO:0006526">
    <property type="term" value="P:L-arginine biosynthetic process"/>
    <property type="evidence" value="ECO:0007669"/>
    <property type="project" value="UniProtKB-UniRule"/>
</dbReference>
<dbReference type="CDD" id="cd01359">
    <property type="entry name" value="Argininosuccinate_lyase"/>
    <property type="match status" value="1"/>
</dbReference>
<dbReference type="FunFam" id="1.20.200.10:FF:000015">
    <property type="entry name" value="argininosuccinate lyase isoform X2"/>
    <property type="match status" value="1"/>
</dbReference>
<dbReference type="Gene3D" id="1.10.40.30">
    <property type="entry name" value="Fumarase/aspartase (C-terminal domain)"/>
    <property type="match status" value="1"/>
</dbReference>
<dbReference type="Gene3D" id="1.20.200.10">
    <property type="entry name" value="Fumarase/aspartase (Central domain)"/>
    <property type="match status" value="1"/>
</dbReference>
<dbReference type="Gene3D" id="1.10.275.10">
    <property type="entry name" value="Fumarase/aspartase (N-terminal domain)"/>
    <property type="match status" value="1"/>
</dbReference>
<dbReference type="HAMAP" id="MF_00006">
    <property type="entry name" value="Arg_succ_lyase"/>
    <property type="match status" value="1"/>
</dbReference>
<dbReference type="InterPro" id="IPR029419">
    <property type="entry name" value="Arg_succ_lyase_C"/>
</dbReference>
<dbReference type="InterPro" id="IPR009049">
    <property type="entry name" value="Argininosuccinate_lyase"/>
</dbReference>
<dbReference type="InterPro" id="IPR024083">
    <property type="entry name" value="Fumarase/histidase_N"/>
</dbReference>
<dbReference type="InterPro" id="IPR000362">
    <property type="entry name" value="Fumarate_lyase_fam"/>
</dbReference>
<dbReference type="InterPro" id="IPR022761">
    <property type="entry name" value="Fumarate_lyase_N"/>
</dbReference>
<dbReference type="InterPro" id="IPR008948">
    <property type="entry name" value="L-Aspartase-like"/>
</dbReference>
<dbReference type="NCBIfam" id="TIGR00838">
    <property type="entry name" value="argH"/>
    <property type="match status" value="1"/>
</dbReference>
<dbReference type="PANTHER" id="PTHR43814">
    <property type="entry name" value="ARGININOSUCCINATE LYASE"/>
    <property type="match status" value="1"/>
</dbReference>
<dbReference type="PANTHER" id="PTHR43814:SF1">
    <property type="entry name" value="ARGININOSUCCINATE LYASE"/>
    <property type="match status" value="1"/>
</dbReference>
<dbReference type="Pfam" id="PF14698">
    <property type="entry name" value="ASL_C2"/>
    <property type="match status" value="1"/>
</dbReference>
<dbReference type="Pfam" id="PF00206">
    <property type="entry name" value="Lyase_1"/>
    <property type="match status" value="1"/>
</dbReference>
<dbReference type="PRINTS" id="PR00145">
    <property type="entry name" value="ARGSUCLYASE"/>
</dbReference>
<dbReference type="PRINTS" id="PR00149">
    <property type="entry name" value="FUMRATELYASE"/>
</dbReference>
<dbReference type="SUPFAM" id="SSF48557">
    <property type="entry name" value="L-aspartase-like"/>
    <property type="match status" value="1"/>
</dbReference>
<gene>
    <name evidence="1" type="primary">argH</name>
    <name type="ordered locus">Mevan_1208</name>
</gene>
<protein>
    <recommendedName>
        <fullName evidence="1">Argininosuccinate lyase</fullName>
        <shortName evidence="1">ASAL</shortName>
        <ecNumber evidence="1">4.3.2.1</ecNumber>
    </recommendedName>
    <alternativeName>
        <fullName evidence="1">Arginosuccinase</fullName>
    </alternativeName>
</protein>